<evidence type="ECO:0000255" key="1">
    <source>
        <dbReference type="HAMAP-Rule" id="MF_01454"/>
    </source>
</evidence>
<evidence type="ECO:0000255" key="2">
    <source>
        <dbReference type="PROSITE-ProRule" id="PRU01231"/>
    </source>
</evidence>
<evidence type="ECO:0000256" key="3">
    <source>
        <dbReference type="SAM" id="MobiDB-lite"/>
    </source>
</evidence>
<feature type="chain" id="PRO_0000385790" description="GTPase Obg">
    <location>
        <begin position="1"/>
        <end position="372"/>
    </location>
</feature>
<feature type="domain" description="Obg" evidence="2">
    <location>
        <begin position="1"/>
        <end position="159"/>
    </location>
</feature>
<feature type="domain" description="OBG-type G" evidence="1">
    <location>
        <begin position="160"/>
        <end position="334"/>
    </location>
</feature>
<feature type="region of interest" description="Disordered" evidence="3">
    <location>
        <begin position="128"/>
        <end position="147"/>
    </location>
</feature>
<feature type="binding site" evidence="1">
    <location>
        <begin position="166"/>
        <end position="173"/>
    </location>
    <ligand>
        <name>GTP</name>
        <dbReference type="ChEBI" id="CHEBI:37565"/>
    </ligand>
</feature>
<feature type="binding site" evidence="1">
    <location>
        <position position="173"/>
    </location>
    <ligand>
        <name>Mg(2+)</name>
        <dbReference type="ChEBI" id="CHEBI:18420"/>
    </ligand>
</feature>
<feature type="binding site" evidence="1">
    <location>
        <begin position="191"/>
        <end position="195"/>
    </location>
    <ligand>
        <name>GTP</name>
        <dbReference type="ChEBI" id="CHEBI:37565"/>
    </ligand>
</feature>
<feature type="binding site" evidence="1">
    <location>
        <position position="193"/>
    </location>
    <ligand>
        <name>Mg(2+)</name>
        <dbReference type="ChEBI" id="CHEBI:18420"/>
    </ligand>
</feature>
<feature type="binding site" evidence="1">
    <location>
        <begin position="213"/>
        <end position="216"/>
    </location>
    <ligand>
        <name>GTP</name>
        <dbReference type="ChEBI" id="CHEBI:37565"/>
    </ligand>
</feature>
<feature type="binding site" evidence="1">
    <location>
        <begin position="284"/>
        <end position="287"/>
    </location>
    <ligand>
        <name>GTP</name>
        <dbReference type="ChEBI" id="CHEBI:37565"/>
    </ligand>
</feature>
<feature type="binding site" evidence="1">
    <location>
        <begin position="315"/>
        <end position="317"/>
    </location>
    <ligand>
        <name>GTP</name>
        <dbReference type="ChEBI" id="CHEBI:37565"/>
    </ligand>
</feature>
<accession>A3NZJ0</accession>
<name>OBG_BURP0</name>
<comment type="function">
    <text evidence="1">An essential GTPase which binds GTP, GDP and possibly (p)ppGpp with moderate affinity, with high nucleotide exchange rates and a fairly low GTP hydrolysis rate. Plays a role in control of the cell cycle, stress response, ribosome biogenesis and in those bacteria that undergo differentiation, in morphogenesis control.</text>
</comment>
<comment type="cofactor">
    <cofactor evidence="1">
        <name>Mg(2+)</name>
        <dbReference type="ChEBI" id="CHEBI:18420"/>
    </cofactor>
</comment>
<comment type="subunit">
    <text evidence="1">Monomer.</text>
</comment>
<comment type="subcellular location">
    <subcellularLocation>
        <location evidence="1">Cytoplasm</location>
    </subcellularLocation>
</comment>
<comment type="similarity">
    <text evidence="1">Belongs to the TRAFAC class OBG-HflX-like GTPase superfamily. OBG GTPase family.</text>
</comment>
<proteinExistence type="inferred from homology"/>
<keyword id="KW-0963">Cytoplasm</keyword>
<keyword id="KW-0342">GTP-binding</keyword>
<keyword id="KW-0378">Hydrolase</keyword>
<keyword id="KW-0460">Magnesium</keyword>
<keyword id="KW-0479">Metal-binding</keyword>
<keyword id="KW-0547">Nucleotide-binding</keyword>
<gene>
    <name evidence="1" type="primary">obg</name>
    <name type="ordered locus">BURPS1106A_3524</name>
</gene>
<reference key="1">
    <citation type="journal article" date="2010" name="Genome Biol. Evol.">
        <title>Continuing evolution of Burkholderia mallei through genome reduction and large-scale rearrangements.</title>
        <authorList>
            <person name="Losada L."/>
            <person name="Ronning C.M."/>
            <person name="DeShazer D."/>
            <person name="Woods D."/>
            <person name="Fedorova N."/>
            <person name="Kim H.S."/>
            <person name="Shabalina S.A."/>
            <person name="Pearson T.R."/>
            <person name="Brinkac L."/>
            <person name="Tan P."/>
            <person name="Nandi T."/>
            <person name="Crabtree J."/>
            <person name="Badger J."/>
            <person name="Beckstrom-Sternberg S."/>
            <person name="Saqib M."/>
            <person name="Schutzer S.E."/>
            <person name="Keim P."/>
            <person name="Nierman W.C."/>
        </authorList>
    </citation>
    <scope>NUCLEOTIDE SEQUENCE [LARGE SCALE GENOMIC DNA]</scope>
    <source>
        <strain>1106a</strain>
    </source>
</reference>
<protein>
    <recommendedName>
        <fullName evidence="1">GTPase Obg</fullName>
        <ecNumber evidence="1">3.6.5.-</ecNumber>
    </recommendedName>
    <alternativeName>
        <fullName evidence="1">GTP-binding protein Obg</fullName>
    </alternativeName>
</protein>
<dbReference type="EC" id="3.6.5.-" evidence="1"/>
<dbReference type="EMBL" id="CP000572">
    <property type="protein sequence ID" value="ABN88897.1"/>
    <property type="molecule type" value="Genomic_DNA"/>
</dbReference>
<dbReference type="SMR" id="A3NZJ0"/>
<dbReference type="KEGG" id="bpl:BURPS1106A_3524"/>
<dbReference type="HOGENOM" id="CLU_011747_2_0_4"/>
<dbReference type="Proteomes" id="UP000006738">
    <property type="component" value="Chromosome I"/>
</dbReference>
<dbReference type="GO" id="GO:0005737">
    <property type="term" value="C:cytoplasm"/>
    <property type="evidence" value="ECO:0007669"/>
    <property type="project" value="UniProtKB-SubCell"/>
</dbReference>
<dbReference type="GO" id="GO:0005525">
    <property type="term" value="F:GTP binding"/>
    <property type="evidence" value="ECO:0007669"/>
    <property type="project" value="UniProtKB-UniRule"/>
</dbReference>
<dbReference type="GO" id="GO:0003924">
    <property type="term" value="F:GTPase activity"/>
    <property type="evidence" value="ECO:0007669"/>
    <property type="project" value="UniProtKB-UniRule"/>
</dbReference>
<dbReference type="GO" id="GO:0000287">
    <property type="term" value="F:magnesium ion binding"/>
    <property type="evidence" value="ECO:0007669"/>
    <property type="project" value="InterPro"/>
</dbReference>
<dbReference type="GO" id="GO:0042254">
    <property type="term" value="P:ribosome biogenesis"/>
    <property type="evidence" value="ECO:0007669"/>
    <property type="project" value="UniProtKB-UniRule"/>
</dbReference>
<dbReference type="CDD" id="cd01898">
    <property type="entry name" value="Obg"/>
    <property type="match status" value="1"/>
</dbReference>
<dbReference type="FunFam" id="2.70.210.12:FF:000001">
    <property type="entry name" value="GTPase Obg"/>
    <property type="match status" value="1"/>
</dbReference>
<dbReference type="Gene3D" id="2.70.210.12">
    <property type="entry name" value="GTP1/OBG domain"/>
    <property type="match status" value="1"/>
</dbReference>
<dbReference type="Gene3D" id="3.40.50.300">
    <property type="entry name" value="P-loop containing nucleotide triphosphate hydrolases"/>
    <property type="match status" value="1"/>
</dbReference>
<dbReference type="HAMAP" id="MF_01454">
    <property type="entry name" value="GTPase_Obg"/>
    <property type="match status" value="1"/>
</dbReference>
<dbReference type="InterPro" id="IPR031167">
    <property type="entry name" value="G_OBG"/>
</dbReference>
<dbReference type="InterPro" id="IPR006073">
    <property type="entry name" value="GTP-bd"/>
</dbReference>
<dbReference type="InterPro" id="IPR014100">
    <property type="entry name" value="GTP-bd_Obg/CgtA"/>
</dbReference>
<dbReference type="InterPro" id="IPR006074">
    <property type="entry name" value="GTP1-OBG_CS"/>
</dbReference>
<dbReference type="InterPro" id="IPR006169">
    <property type="entry name" value="GTP1_OBG_dom"/>
</dbReference>
<dbReference type="InterPro" id="IPR036726">
    <property type="entry name" value="GTP1_OBG_dom_sf"/>
</dbReference>
<dbReference type="InterPro" id="IPR045086">
    <property type="entry name" value="OBG_GTPase"/>
</dbReference>
<dbReference type="InterPro" id="IPR027417">
    <property type="entry name" value="P-loop_NTPase"/>
</dbReference>
<dbReference type="NCBIfam" id="TIGR02729">
    <property type="entry name" value="Obg_CgtA"/>
    <property type="match status" value="1"/>
</dbReference>
<dbReference type="NCBIfam" id="NF008954">
    <property type="entry name" value="PRK12296.1"/>
    <property type="match status" value="1"/>
</dbReference>
<dbReference type="NCBIfam" id="NF008955">
    <property type="entry name" value="PRK12297.1"/>
    <property type="match status" value="1"/>
</dbReference>
<dbReference type="NCBIfam" id="NF008956">
    <property type="entry name" value="PRK12299.1"/>
    <property type="match status" value="1"/>
</dbReference>
<dbReference type="PANTHER" id="PTHR11702">
    <property type="entry name" value="DEVELOPMENTALLY REGULATED GTP-BINDING PROTEIN-RELATED"/>
    <property type="match status" value="1"/>
</dbReference>
<dbReference type="PANTHER" id="PTHR11702:SF31">
    <property type="entry name" value="MITOCHONDRIAL RIBOSOME-ASSOCIATED GTPASE 2"/>
    <property type="match status" value="1"/>
</dbReference>
<dbReference type="Pfam" id="PF01018">
    <property type="entry name" value="GTP1_OBG"/>
    <property type="match status" value="1"/>
</dbReference>
<dbReference type="Pfam" id="PF01926">
    <property type="entry name" value="MMR_HSR1"/>
    <property type="match status" value="1"/>
</dbReference>
<dbReference type="PIRSF" id="PIRSF002401">
    <property type="entry name" value="GTP_bd_Obg/CgtA"/>
    <property type="match status" value="1"/>
</dbReference>
<dbReference type="PRINTS" id="PR00326">
    <property type="entry name" value="GTP1OBG"/>
</dbReference>
<dbReference type="SUPFAM" id="SSF82051">
    <property type="entry name" value="Obg GTP-binding protein N-terminal domain"/>
    <property type="match status" value="1"/>
</dbReference>
<dbReference type="SUPFAM" id="SSF52540">
    <property type="entry name" value="P-loop containing nucleoside triphosphate hydrolases"/>
    <property type="match status" value="1"/>
</dbReference>
<dbReference type="PROSITE" id="PS51710">
    <property type="entry name" value="G_OBG"/>
    <property type="match status" value="1"/>
</dbReference>
<dbReference type="PROSITE" id="PS00905">
    <property type="entry name" value="GTP1_OBG"/>
    <property type="match status" value="1"/>
</dbReference>
<dbReference type="PROSITE" id="PS51883">
    <property type="entry name" value="OBG"/>
    <property type="match status" value="1"/>
</dbReference>
<sequence>MKFIDEARIEVIAGDGGDGSASMRREKFVPFGGPDGGDGGRGGSVYVIADRNINTLIDYRYAKKHMARNGENGRGSDCYGKGGDDITLRMPVGTVINDMDTGELIADLTEHDQKVLVAKGGAGGLGNLHFKSSTNRAPRQKTDGKPGERRMLKLELKVLADVGLLGMPNAGKSTFISSVSNAKPKIADYPFTTLAPNLGVVRVGPGKSFVIADIPGLIEGAAEGAGLGHQFLRHLQRTGLLLHLVDLAPFDERVDPVAEARAIVGELRKYDESLYEKPRWLVLNKLDMVPEDERRARVADFIERFGWTGPVFEISALTGQGCEGLVYAIHDYLVEHSDAHRAELAEDLASDVRFRDAPGAGGEPHERDAGAH</sequence>
<organism>
    <name type="scientific">Burkholderia pseudomallei (strain 1106a)</name>
    <dbReference type="NCBI Taxonomy" id="357348"/>
    <lineage>
        <taxon>Bacteria</taxon>
        <taxon>Pseudomonadati</taxon>
        <taxon>Pseudomonadota</taxon>
        <taxon>Betaproteobacteria</taxon>
        <taxon>Burkholderiales</taxon>
        <taxon>Burkholderiaceae</taxon>
        <taxon>Burkholderia</taxon>
        <taxon>pseudomallei group</taxon>
    </lineage>
</organism>